<gene>
    <name evidence="1" type="primary">msrA</name>
    <name type="ordered locus">ECS88_4812</name>
</gene>
<proteinExistence type="inferred from homology"/>
<dbReference type="EC" id="1.8.4.11" evidence="1"/>
<dbReference type="EMBL" id="CU928161">
    <property type="protein sequence ID" value="CAR05961.1"/>
    <property type="molecule type" value="Genomic_DNA"/>
</dbReference>
<dbReference type="RefSeq" id="WP_001295196.1">
    <property type="nucleotide sequence ID" value="NC_011742.1"/>
</dbReference>
<dbReference type="SMR" id="B7MLN1"/>
<dbReference type="GeneID" id="93777602"/>
<dbReference type="KEGG" id="ecz:ECS88_4812"/>
<dbReference type="HOGENOM" id="CLU_031040_10_3_6"/>
<dbReference type="Proteomes" id="UP000000747">
    <property type="component" value="Chromosome"/>
</dbReference>
<dbReference type="GO" id="GO:0005737">
    <property type="term" value="C:cytoplasm"/>
    <property type="evidence" value="ECO:0007669"/>
    <property type="project" value="TreeGrafter"/>
</dbReference>
<dbReference type="GO" id="GO:0036456">
    <property type="term" value="F:L-methionine-(S)-S-oxide reductase activity"/>
    <property type="evidence" value="ECO:0007669"/>
    <property type="project" value="TreeGrafter"/>
</dbReference>
<dbReference type="GO" id="GO:0008113">
    <property type="term" value="F:peptide-methionine (S)-S-oxide reductase activity"/>
    <property type="evidence" value="ECO:0007669"/>
    <property type="project" value="UniProtKB-UniRule"/>
</dbReference>
<dbReference type="GO" id="GO:0034599">
    <property type="term" value="P:cellular response to oxidative stress"/>
    <property type="evidence" value="ECO:0007669"/>
    <property type="project" value="TreeGrafter"/>
</dbReference>
<dbReference type="GO" id="GO:0036211">
    <property type="term" value="P:protein modification process"/>
    <property type="evidence" value="ECO:0007669"/>
    <property type="project" value="UniProtKB-UniRule"/>
</dbReference>
<dbReference type="FunFam" id="3.30.1060.10:FF:000001">
    <property type="entry name" value="Peptide methionine sulfoxide reductase MsrA"/>
    <property type="match status" value="1"/>
</dbReference>
<dbReference type="Gene3D" id="3.30.1060.10">
    <property type="entry name" value="Peptide methionine sulphoxide reductase MsrA"/>
    <property type="match status" value="1"/>
</dbReference>
<dbReference type="HAMAP" id="MF_01401">
    <property type="entry name" value="MsrA"/>
    <property type="match status" value="1"/>
</dbReference>
<dbReference type="InterPro" id="IPR002569">
    <property type="entry name" value="Met_Sox_Rdtase_MsrA_dom"/>
</dbReference>
<dbReference type="InterPro" id="IPR036509">
    <property type="entry name" value="Met_Sox_Rdtase_MsrA_sf"/>
</dbReference>
<dbReference type="InterPro" id="IPR050162">
    <property type="entry name" value="MsrA_MetSO_reductase"/>
</dbReference>
<dbReference type="NCBIfam" id="TIGR00401">
    <property type="entry name" value="msrA"/>
    <property type="match status" value="1"/>
</dbReference>
<dbReference type="PANTHER" id="PTHR42799">
    <property type="entry name" value="MITOCHONDRIAL PEPTIDE METHIONINE SULFOXIDE REDUCTASE"/>
    <property type="match status" value="1"/>
</dbReference>
<dbReference type="PANTHER" id="PTHR42799:SF2">
    <property type="entry name" value="MITOCHONDRIAL PEPTIDE METHIONINE SULFOXIDE REDUCTASE"/>
    <property type="match status" value="1"/>
</dbReference>
<dbReference type="Pfam" id="PF01625">
    <property type="entry name" value="PMSR"/>
    <property type="match status" value="1"/>
</dbReference>
<dbReference type="SUPFAM" id="SSF55068">
    <property type="entry name" value="Peptide methionine sulfoxide reductase"/>
    <property type="match status" value="1"/>
</dbReference>
<feature type="chain" id="PRO_1000145399" description="Peptide methionine sulfoxide reductase MsrA">
    <location>
        <begin position="1"/>
        <end position="212"/>
    </location>
</feature>
<feature type="active site" evidence="1">
    <location>
        <position position="52"/>
    </location>
</feature>
<reference key="1">
    <citation type="journal article" date="2009" name="PLoS Genet.">
        <title>Organised genome dynamics in the Escherichia coli species results in highly diverse adaptive paths.</title>
        <authorList>
            <person name="Touchon M."/>
            <person name="Hoede C."/>
            <person name="Tenaillon O."/>
            <person name="Barbe V."/>
            <person name="Baeriswyl S."/>
            <person name="Bidet P."/>
            <person name="Bingen E."/>
            <person name="Bonacorsi S."/>
            <person name="Bouchier C."/>
            <person name="Bouvet O."/>
            <person name="Calteau A."/>
            <person name="Chiapello H."/>
            <person name="Clermont O."/>
            <person name="Cruveiller S."/>
            <person name="Danchin A."/>
            <person name="Diard M."/>
            <person name="Dossat C."/>
            <person name="Karoui M.E."/>
            <person name="Frapy E."/>
            <person name="Garry L."/>
            <person name="Ghigo J.M."/>
            <person name="Gilles A.M."/>
            <person name="Johnson J."/>
            <person name="Le Bouguenec C."/>
            <person name="Lescat M."/>
            <person name="Mangenot S."/>
            <person name="Martinez-Jehanne V."/>
            <person name="Matic I."/>
            <person name="Nassif X."/>
            <person name="Oztas S."/>
            <person name="Petit M.A."/>
            <person name="Pichon C."/>
            <person name="Rouy Z."/>
            <person name="Ruf C.S."/>
            <person name="Schneider D."/>
            <person name="Tourret J."/>
            <person name="Vacherie B."/>
            <person name="Vallenet D."/>
            <person name="Medigue C."/>
            <person name="Rocha E.P.C."/>
            <person name="Denamur E."/>
        </authorList>
    </citation>
    <scope>NUCLEOTIDE SEQUENCE [LARGE SCALE GENOMIC DNA]</scope>
    <source>
        <strain>S88 / ExPEC</strain>
    </source>
</reference>
<sequence>MSLFDKKHLVSPADALPGRNTPMPVATLHAVNGHSMTNVPDGMEIAIFAMGCFWGVERLFWQLPGVYSTAAGYTGGYTPNPTYREVCSGDTGHAEAVRIVYDPSVISYEQLLQVFWENHDPAQGMRQGNDHGTQYRSAIYPLTPEQDAAARASLERFQAAMLAADDDRHITTEIANATPFYYAEDDHQQYLHKNPYGYCGIGGIGVCLPPEA</sequence>
<keyword id="KW-0560">Oxidoreductase</keyword>
<keyword id="KW-1185">Reference proteome</keyword>
<accession>B7MLN1</accession>
<organism>
    <name type="scientific">Escherichia coli O45:K1 (strain S88 / ExPEC)</name>
    <dbReference type="NCBI Taxonomy" id="585035"/>
    <lineage>
        <taxon>Bacteria</taxon>
        <taxon>Pseudomonadati</taxon>
        <taxon>Pseudomonadota</taxon>
        <taxon>Gammaproteobacteria</taxon>
        <taxon>Enterobacterales</taxon>
        <taxon>Enterobacteriaceae</taxon>
        <taxon>Escherichia</taxon>
    </lineage>
</organism>
<comment type="function">
    <text evidence="1">Has an important function as a repair enzyme for proteins that have been inactivated by oxidation. Catalyzes the reversible oxidation-reduction of methionine sulfoxide in proteins to methionine.</text>
</comment>
<comment type="catalytic activity">
    <reaction evidence="1">
        <text>L-methionyl-[protein] + [thioredoxin]-disulfide + H2O = L-methionyl-(S)-S-oxide-[protein] + [thioredoxin]-dithiol</text>
        <dbReference type="Rhea" id="RHEA:14217"/>
        <dbReference type="Rhea" id="RHEA-COMP:10698"/>
        <dbReference type="Rhea" id="RHEA-COMP:10700"/>
        <dbReference type="Rhea" id="RHEA-COMP:12313"/>
        <dbReference type="Rhea" id="RHEA-COMP:12315"/>
        <dbReference type="ChEBI" id="CHEBI:15377"/>
        <dbReference type="ChEBI" id="CHEBI:16044"/>
        <dbReference type="ChEBI" id="CHEBI:29950"/>
        <dbReference type="ChEBI" id="CHEBI:44120"/>
        <dbReference type="ChEBI" id="CHEBI:50058"/>
        <dbReference type="EC" id="1.8.4.11"/>
    </reaction>
</comment>
<comment type="catalytic activity">
    <reaction evidence="1">
        <text>[thioredoxin]-disulfide + L-methionine + H2O = L-methionine (S)-S-oxide + [thioredoxin]-dithiol</text>
        <dbReference type="Rhea" id="RHEA:19993"/>
        <dbReference type="Rhea" id="RHEA-COMP:10698"/>
        <dbReference type="Rhea" id="RHEA-COMP:10700"/>
        <dbReference type="ChEBI" id="CHEBI:15377"/>
        <dbReference type="ChEBI" id="CHEBI:29950"/>
        <dbReference type="ChEBI" id="CHEBI:50058"/>
        <dbReference type="ChEBI" id="CHEBI:57844"/>
        <dbReference type="ChEBI" id="CHEBI:58772"/>
        <dbReference type="EC" id="1.8.4.11"/>
    </reaction>
</comment>
<comment type="similarity">
    <text evidence="1">Belongs to the MsrA Met sulfoxide reductase family.</text>
</comment>
<evidence type="ECO:0000255" key="1">
    <source>
        <dbReference type="HAMAP-Rule" id="MF_01401"/>
    </source>
</evidence>
<protein>
    <recommendedName>
        <fullName evidence="1">Peptide methionine sulfoxide reductase MsrA</fullName>
        <shortName evidence="1">Protein-methionine-S-oxide reductase</shortName>
        <ecNumber evidence="1">1.8.4.11</ecNumber>
    </recommendedName>
    <alternativeName>
        <fullName evidence="1">Peptide-methionine (S)-S-oxide reductase</fullName>
        <shortName evidence="1">Peptide Met(O) reductase</shortName>
    </alternativeName>
</protein>
<name>MSRA_ECO45</name>